<name>ACH3_DROME</name>
<evidence type="ECO:0000250" key="1"/>
<evidence type="ECO:0000255" key="2"/>
<evidence type="ECO:0000269" key="3">
    <source>
    </source>
</evidence>
<evidence type="ECO:0000305" key="4"/>
<accession>P04755</accession>
<accession>Q9VZC3</accession>
<dbReference type="EMBL" id="X04016">
    <property type="protein sequence ID" value="CAA27641.1"/>
    <property type="molecule type" value="mRNA"/>
</dbReference>
<dbReference type="EMBL" id="X07956">
    <property type="protein sequence ID" value="CAA30778.1"/>
    <property type="molecule type" value="Genomic_DNA"/>
</dbReference>
<dbReference type="EMBL" id="X07957">
    <property type="protein sequence ID" value="CAA30778.1"/>
    <property type="status" value="JOINED"/>
    <property type="molecule type" value="Genomic_DNA"/>
</dbReference>
<dbReference type="EMBL" id="X07958">
    <property type="protein sequence ID" value="CAA30778.1"/>
    <property type="status" value="JOINED"/>
    <property type="molecule type" value="Genomic_DNA"/>
</dbReference>
<dbReference type="EMBL" id="M20316">
    <property type="protein sequence ID" value="AAA28311.1"/>
    <property type="molecule type" value="mRNA"/>
</dbReference>
<dbReference type="EMBL" id="AE014296">
    <property type="protein sequence ID" value="AAF47900.1"/>
    <property type="molecule type" value="Genomic_DNA"/>
</dbReference>
<dbReference type="PIR" id="S03012">
    <property type="entry name" value="ACFFNN"/>
</dbReference>
<dbReference type="RefSeq" id="NP_523927.2">
    <property type="nucleotide sequence ID" value="NM_079203.3"/>
</dbReference>
<dbReference type="SMR" id="P04755"/>
<dbReference type="BioGRID" id="64020">
    <property type="interactions" value="1"/>
</dbReference>
<dbReference type="STRING" id="7227.FBpp0073155"/>
<dbReference type="ChEMBL" id="CHEMBL3350223"/>
<dbReference type="GlyCosmos" id="P04755">
    <property type="glycosylation" value="1 site, No reported glycans"/>
</dbReference>
<dbReference type="GlyGen" id="P04755">
    <property type="glycosylation" value="1 site"/>
</dbReference>
<dbReference type="PaxDb" id="7227-FBpp0073155"/>
<dbReference type="DNASU" id="38545"/>
<dbReference type="GeneID" id="38545"/>
<dbReference type="KEGG" id="dme:Dmel_CG11348"/>
<dbReference type="AGR" id="FB:FBgn0000038"/>
<dbReference type="CTD" id="38545"/>
<dbReference type="FlyBase" id="FBgn0000038">
    <property type="gene designation" value="nAChRbeta1"/>
</dbReference>
<dbReference type="eggNOG" id="KOG3645">
    <property type="taxonomic scope" value="Eukaryota"/>
</dbReference>
<dbReference type="HOGENOM" id="CLU_018074_1_0_1"/>
<dbReference type="InParanoid" id="P04755"/>
<dbReference type="OrthoDB" id="5975154at2759"/>
<dbReference type="PhylomeDB" id="P04755"/>
<dbReference type="Reactome" id="R-DME-629587">
    <property type="pathway name" value="Highly sodium permeable postsynaptic acetylcholine nicotinic receptors"/>
</dbReference>
<dbReference type="Reactome" id="R-DME-629594">
    <property type="pathway name" value="Highly calcium permeable postsynaptic nicotinic acetylcholine receptors"/>
</dbReference>
<dbReference type="Reactome" id="R-DME-629597">
    <property type="pathway name" value="Highly calcium permeable nicotinic acetylcholine receptors"/>
</dbReference>
<dbReference type="Reactome" id="R-DME-6798695">
    <property type="pathway name" value="Neutrophil degranulation"/>
</dbReference>
<dbReference type="BioGRID-ORCS" id="38545">
    <property type="hits" value="0 hits in 3 CRISPR screens"/>
</dbReference>
<dbReference type="ChiTaRS" id="nAChRbeta1">
    <property type="organism name" value="fly"/>
</dbReference>
<dbReference type="GenomeRNAi" id="38545"/>
<dbReference type="PRO" id="PR:P04755"/>
<dbReference type="Proteomes" id="UP000000803">
    <property type="component" value="Chromosome 3L"/>
</dbReference>
<dbReference type="ExpressionAtlas" id="P04755">
    <property type="expression patterns" value="baseline and differential"/>
</dbReference>
<dbReference type="GO" id="GO:0005892">
    <property type="term" value="C:acetylcholine-gated channel complex"/>
    <property type="evidence" value="ECO:0000318"/>
    <property type="project" value="GO_Central"/>
</dbReference>
<dbReference type="GO" id="GO:0043005">
    <property type="term" value="C:neuron projection"/>
    <property type="evidence" value="ECO:0000318"/>
    <property type="project" value="GO_Central"/>
</dbReference>
<dbReference type="GO" id="GO:0005886">
    <property type="term" value="C:plasma membrane"/>
    <property type="evidence" value="ECO:0000318"/>
    <property type="project" value="GO_Central"/>
</dbReference>
<dbReference type="GO" id="GO:0045211">
    <property type="term" value="C:postsynaptic membrane"/>
    <property type="evidence" value="ECO:0000314"/>
    <property type="project" value="FlyBase"/>
</dbReference>
<dbReference type="GO" id="GO:0045202">
    <property type="term" value="C:synapse"/>
    <property type="evidence" value="ECO:0000318"/>
    <property type="project" value="GO_Central"/>
</dbReference>
<dbReference type="GO" id="GO:0022848">
    <property type="term" value="F:acetylcholine-gated monoatomic cation-selective channel activity"/>
    <property type="evidence" value="ECO:0007669"/>
    <property type="project" value="InterPro"/>
</dbReference>
<dbReference type="GO" id="GO:0005231">
    <property type="term" value="F:excitatory extracellular ligand-gated monoatomic ion channel activity"/>
    <property type="evidence" value="ECO:0000318"/>
    <property type="project" value="GO_Central"/>
</dbReference>
<dbReference type="GO" id="GO:0004888">
    <property type="term" value="F:transmembrane signaling receptor activity"/>
    <property type="evidence" value="ECO:0007669"/>
    <property type="project" value="InterPro"/>
</dbReference>
<dbReference type="GO" id="GO:1904315">
    <property type="term" value="F:transmitter-gated monoatomic ion channel activity involved in regulation of postsynaptic membrane potential"/>
    <property type="evidence" value="ECO:0000318"/>
    <property type="project" value="GO_Central"/>
</dbReference>
<dbReference type="GO" id="GO:0007268">
    <property type="term" value="P:chemical synaptic transmission"/>
    <property type="evidence" value="ECO:0000318"/>
    <property type="project" value="GO_Central"/>
</dbReference>
<dbReference type="GO" id="GO:0034220">
    <property type="term" value="P:monoatomic ion transmembrane transport"/>
    <property type="evidence" value="ECO:0000318"/>
    <property type="project" value="GO_Central"/>
</dbReference>
<dbReference type="GO" id="GO:0042391">
    <property type="term" value="P:regulation of membrane potential"/>
    <property type="evidence" value="ECO:0000318"/>
    <property type="project" value="GO_Central"/>
</dbReference>
<dbReference type="GO" id="GO:0007271">
    <property type="term" value="P:synaptic transmission, cholinergic"/>
    <property type="evidence" value="ECO:0000270"/>
    <property type="project" value="FlyBase"/>
</dbReference>
<dbReference type="CDD" id="cd19032">
    <property type="entry name" value="LGIC_ECD_nAChR_proto_beta-like"/>
    <property type="match status" value="1"/>
</dbReference>
<dbReference type="CDD" id="cd19064">
    <property type="entry name" value="LGIC_TM_nAChR"/>
    <property type="match status" value="1"/>
</dbReference>
<dbReference type="FunFam" id="1.20.58.390:FF:000035">
    <property type="entry name" value="Acetylcholine receptor subunit beta-like 1"/>
    <property type="match status" value="1"/>
</dbReference>
<dbReference type="FunFam" id="1.20.58.390:FF:000038">
    <property type="entry name" value="Acetylcholine receptor subunit beta-like 1"/>
    <property type="match status" value="1"/>
</dbReference>
<dbReference type="FunFam" id="2.70.170.10:FF:000023">
    <property type="entry name" value="Acetylcholine receptor subunit beta-like 1"/>
    <property type="match status" value="1"/>
</dbReference>
<dbReference type="Gene3D" id="2.70.170.10">
    <property type="entry name" value="Neurotransmitter-gated ion-channel ligand-binding domain"/>
    <property type="match status" value="1"/>
</dbReference>
<dbReference type="Gene3D" id="1.20.58.390">
    <property type="entry name" value="Neurotransmitter-gated ion-channel transmembrane domain"/>
    <property type="match status" value="2"/>
</dbReference>
<dbReference type="InterPro" id="IPR006202">
    <property type="entry name" value="Neur_chan_lig-bd"/>
</dbReference>
<dbReference type="InterPro" id="IPR036734">
    <property type="entry name" value="Neur_chan_lig-bd_sf"/>
</dbReference>
<dbReference type="InterPro" id="IPR006201">
    <property type="entry name" value="Neur_channel"/>
</dbReference>
<dbReference type="InterPro" id="IPR036719">
    <property type="entry name" value="Neuro-gated_channel_TM_sf"/>
</dbReference>
<dbReference type="InterPro" id="IPR038050">
    <property type="entry name" value="Neuro_actylchol_rec"/>
</dbReference>
<dbReference type="InterPro" id="IPR006029">
    <property type="entry name" value="Neurotrans-gated_channel_TM"/>
</dbReference>
<dbReference type="InterPro" id="IPR018000">
    <property type="entry name" value="Neurotransmitter_ion_chnl_CS"/>
</dbReference>
<dbReference type="InterPro" id="IPR002394">
    <property type="entry name" value="Nicotinic_acetylcholine_rcpt"/>
</dbReference>
<dbReference type="NCBIfam" id="TIGR00860">
    <property type="entry name" value="LIC"/>
    <property type="match status" value="1"/>
</dbReference>
<dbReference type="PANTHER" id="PTHR18945">
    <property type="entry name" value="NEUROTRANSMITTER GATED ION CHANNEL"/>
    <property type="match status" value="1"/>
</dbReference>
<dbReference type="Pfam" id="PF02931">
    <property type="entry name" value="Neur_chan_LBD"/>
    <property type="match status" value="1"/>
</dbReference>
<dbReference type="Pfam" id="PF02932">
    <property type="entry name" value="Neur_chan_memb"/>
    <property type="match status" value="1"/>
</dbReference>
<dbReference type="PRINTS" id="PR00254">
    <property type="entry name" value="NICOTINICR"/>
</dbReference>
<dbReference type="PRINTS" id="PR00252">
    <property type="entry name" value="NRIONCHANNEL"/>
</dbReference>
<dbReference type="SUPFAM" id="SSF90112">
    <property type="entry name" value="Neurotransmitter-gated ion-channel transmembrane pore"/>
    <property type="match status" value="1"/>
</dbReference>
<dbReference type="SUPFAM" id="SSF63712">
    <property type="entry name" value="Nicotinic receptor ligand binding domain-like"/>
    <property type="match status" value="1"/>
</dbReference>
<dbReference type="PROSITE" id="PS00236">
    <property type="entry name" value="NEUROTR_ION_CHANNEL"/>
    <property type="match status" value="1"/>
</dbReference>
<protein>
    <recommendedName>
        <fullName>Acetylcholine receptor subunit beta-like 1</fullName>
    </recommendedName>
    <alternativeName>
        <fullName>Nicotinic acetylcholine receptor beta 1</fullName>
    </alternativeName>
</protein>
<proteinExistence type="evidence at transcript level"/>
<reference key="1">
    <citation type="journal article" date="1986" name="EMBO J.">
        <title>Primary structure of a developmentally regulated nicotinic acetylcholine receptor protein from Drosophila.</title>
        <authorList>
            <person name="Hermans-Borgmeyer I."/>
            <person name="Zopf D."/>
            <person name="Ryseck R.-P."/>
            <person name="Hovemann B."/>
            <person name="Betz H."/>
            <person name="Gundelfinger E.D."/>
        </authorList>
    </citation>
    <scope>NUCLEOTIDE SEQUENCE [MRNA]</scope>
    <scope>TISSUE SPECIFICITY</scope>
    <scope>DEVELOPMENTAL STAGE</scope>
</reference>
<reference key="2">
    <citation type="journal article" date="1988" name="FEBS Lett.">
        <title>Characterization of an invertebrate nicotinic acetylcholine receptor gene: the ard gene of Drosophila melanogaster.</title>
        <authorList>
            <person name="Sawruk E."/>
            <person name="Hermans-Borgmeyer I."/>
            <person name="Betz H."/>
            <person name="Gundelfinger E.D."/>
        </authorList>
    </citation>
    <scope>NUCLEOTIDE SEQUENCE [GENOMIC DNA]</scope>
</reference>
<reference key="3">
    <citation type="journal article" date="1988" name="Mol. Cell. Biol.">
        <title>Expression of a Drosophila melanogaster acetylcholine receptor-related gene in the central nervous system.</title>
        <authorList>
            <person name="Wadsworth S.C."/>
            <person name="Rosenthal L.S."/>
            <person name="Kammermeyer K.L."/>
            <person name="Potter M.B."/>
            <person name="Nelson D.J."/>
        </authorList>
    </citation>
    <scope>NUCLEOTIDE SEQUENCE [MRNA]</scope>
</reference>
<reference key="4">
    <citation type="journal article" date="2000" name="Science">
        <title>The genome sequence of Drosophila melanogaster.</title>
        <authorList>
            <person name="Adams M.D."/>
            <person name="Celniker S.E."/>
            <person name="Holt R.A."/>
            <person name="Evans C.A."/>
            <person name="Gocayne J.D."/>
            <person name="Amanatides P.G."/>
            <person name="Scherer S.E."/>
            <person name="Li P.W."/>
            <person name="Hoskins R.A."/>
            <person name="Galle R.F."/>
            <person name="George R.A."/>
            <person name="Lewis S.E."/>
            <person name="Richards S."/>
            <person name="Ashburner M."/>
            <person name="Henderson S.N."/>
            <person name="Sutton G.G."/>
            <person name="Wortman J.R."/>
            <person name="Yandell M.D."/>
            <person name="Zhang Q."/>
            <person name="Chen L.X."/>
            <person name="Brandon R.C."/>
            <person name="Rogers Y.-H.C."/>
            <person name="Blazej R.G."/>
            <person name="Champe M."/>
            <person name="Pfeiffer B.D."/>
            <person name="Wan K.H."/>
            <person name="Doyle C."/>
            <person name="Baxter E.G."/>
            <person name="Helt G."/>
            <person name="Nelson C.R."/>
            <person name="Miklos G.L.G."/>
            <person name="Abril J.F."/>
            <person name="Agbayani A."/>
            <person name="An H.-J."/>
            <person name="Andrews-Pfannkoch C."/>
            <person name="Baldwin D."/>
            <person name="Ballew R.M."/>
            <person name="Basu A."/>
            <person name="Baxendale J."/>
            <person name="Bayraktaroglu L."/>
            <person name="Beasley E.M."/>
            <person name="Beeson K.Y."/>
            <person name="Benos P.V."/>
            <person name="Berman B.P."/>
            <person name="Bhandari D."/>
            <person name="Bolshakov S."/>
            <person name="Borkova D."/>
            <person name="Botchan M.R."/>
            <person name="Bouck J."/>
            <person name="Brokstein P."/>
            <person name="Brottier P."/>
            <person name="Burtis K.C."/>
            <person name="Busam D.A."/>
            <person name="Butler H."/>
            <person name="Cadieu E."/>
            <person name="Center A."/>
            <person name="Chandra I."/>
            <person name="Cherry J.M."/>
            <person name="Cawley S."/>
            <person name="Dahlke C."/>
            <person name="Davenport L.B."/>
            <person name="Davies P."/>
            <person name="de Pablos B."/>
            <person name="Delcher A."/>
            <person name="Deng Z."/>
            <person name="Mays A.D."/>
            <person name="Dew I."/>
            <person name="Dietz S.M."/>
            <person name="Dodson K."/>
            <person name="Doup L.E."/>
            <person name="Downes M."/>
            <person name="Dugan-Rocha S."/>
            <person name="Dunkov B.C."/>
            <person name="Dunn P."/>
            <person name="Durbin K.J."/>
            <person name="Evangelista C.C."/>
            <person name="Ferraz C."/>
            <person name="Ferriera S."/>
            <person name="Fleischmann W."/>
            <person name="Fosler C."/>
            <person name="Gabrielian A.E."/>
            <person name="Garg N.S."/>
            <person name="Gelbart W.M."/>
            <person name="Glasser K."/>
            <person name="Glodek A."/>
            <person name="Gong F."/>
            <person name="Gorrell J.H."/>
            <person name="Gu Z."/>
            <person name="Guan P."/>
            <person name="Harris M."/>
            <person name="Harris N.L."/>
            <person name="Harvey D.A."/>
            <person name="Heiman T.J."/>
            <person name="Hernandez J.R."/>
            <person name="Houck J."/>
            <person name="Hostin D."/>
            <person name="Houston K.A."/>
            <person name="Howland T.J."/>
            <person name="Wei M.-H."/>
            <person name="Ibegwam C."/>
            <person name="Jalali M."/>
            <person name="Kalush F."/>
            <person name="Karpen G.H."/>
            <person name="Ke Z."/>
            <person name="Kennison J.A."/>
            <person name="Ketchum K.A."/>
            <person name="Kimmel B.E."/>
            <person name="Kodira C.D."/>
            <person name="Kraft C.L."/>
            <person name="Kravitz S."/>
            <person name="Kulp D."/>
            <person name="Lai Z."/>
            <person name="Lasko P."/>
            <person name="Lei Y."/>
            <person name="Levitsky A.A."/>
            <person name="Li J.H."/>
            <person name="Li Z."/>
            <person name="Liang Y."/>
            <person name="Lin X."/>
            <person name="Liu X."/>
            <person name="Mattei B."/>
            <person name="McIntosh T.C."/>
            <person name="McLeod M.P."/>
            <person name="McPherson D."/>
            <person name="Merkulov G."/>
            <person name="Milshina N.V."/>
            <person name="Mobarry C."/>
            <person name="Morris J."/>
            <person name="Moshrefi A."/>
            <person name="Mount S.M."/>
            <person name="Moy M."/>
            <person name="Murphy B."/>
            <person name="Murphy L."/>
            <person name="Muzny D.M."/>
            <person name="Nelson D.L."/>
            <person name="Nelson D.R."/>
            <person name="Nelson K.A."/>
            <person name="Nixon K."/>
            <person name="Nusskern D.R."/>
            <person name="Pacleb J.M."/>
            <person name="Palazzolo M."/>
            <person name="Pittman G.S."/>
            <person name="Pan S."/>
            <person name="Pollard J."/>
            <person name="Puri V."/>
            <person name="Reese M.G."/>
            <person name="Reinert K."/>
            <person name="Remington K."/>
            <person name="Saunders R.D.C."/>
            <person name="Scheeler F."/>
            <person name="Shen H."/>
            <person name="Shue B.C."/>
            <person name="Siden-Kiamos I."/>
            <person name="Simpson M."/>
            <person name="Skupski M.P."/>
            <person name="Smith T.J."/>
            <person name="Spier E."/>
            <person name="Spradling A.C."/>
            <person name="Stapleton M."/>
            <person name="Strong R."/>
            <person name="Sun E."/>
            <person name="Svirskas R."/>
            <person name="Tector C."/>
            <person name="Turner R."/>
            <person name="Venter E."/>
            <person name="Wang A.H."/>
            <person name="Wang X."/>
            <person name="Wang Z.-Y."/>
            <person name="Wassarman D.A."/>
            <person name="Weinstock G.M."/>
            <person name="Weissenbach J."/>
            <person name="Williams S.M."/>
            <person name="Woodage T."/>
            <person name="Worley K.C."/>
            <person name="Wu D."/>
            <person name="Yang S."/>
            <person name="Yao Q.A."/>
            <person name="Ye J."/>
            <person name="Yeh R.-F."/>
            <person name="Zaveri J.S."/>
            <person name="Zhan M."/>
            <person name="Zhang G."/>
            <person name="Zhao Q."/>
            <person name="Zheng L."/>
            <person name="Zheng X.H."/>
            <person name="Zhong F.N."/>
            <person name="Zhong W."/>
            <person name="Zhou X."/>
            <person name="Zhu S.C."/>
            <person name="Zhu X."/>
            <person name="Smith H.O."/>
            <person name="Gibbs R.A."/>
            <person name="Myers E.W."/>
            <person name="Rubin G.M."/>
            <person name="Venter J.C."/>
        </authorList>
    </citation>
    <scope>NUCLEOTIDE SEQUENCE [LARGE SCALE GENOMIC DNA]</scope>
    <source>
        <strain>Berkeley</strain>
    </source>
</reference>
<reference key="5">
    <citation type="journal article" date="2002" name="Genome Biol.">
        <title>Annotation of the Drosophila melanogaster euchromatic genome: a systematic review.</title>
        <authorList>
            <person name="Misra S."/>
            <person name="Crosby M.A."/>
            <person name="Mungall C.J."/>
            <person name="Matthews B.B."/>
            <person name="Campbell K.S."/>
            <person name="Hradecky P."/>
            <person name="Huang Y."/>
            <person name="Kaminker J.S."/>
            <person name="Millburn G.H."/>
            <person name="Prochnik S.E."/>
            <person name="Smith C.D."/>
            <person name="Tupy J.L."/>
            <person name="Whitfield E.J."/>
            <person name="Bayraktaroglu L."/>
            <person name="Berman B.P."/>
            <person name="Bettencourt B.R."/>
            <person name="Celniker S.E."/>
            <person name="de Grey A.D.N.J."/>
            <person name="Drysdale R.A."/>
            <person name="Harris N.L."/>
            <person name="Richter J."/>
            <person name="Russo S."/>
            <person name="Schroeder A.J."/>
            <person name="Shu S.Q."/>
            <person name="Stapleton M."/>
            <person name="Yamada C."/>
            <person name="Ashburner M."/>
            <person name="Gelbart W.M."/>
            <person name="Rubin G.M."/>
            <person name="Lewis S.E."/>
        </authorList>
    </citation>
    <scope>GENOME REANNOTATION</scope>
    <source>
        <strain>Berkeley</strain>
    </source>
</reference>
<sequence length="521" mass="59902">MESSCKSWLLCSILVLVAFSLVSASEDEERLVRDLFRGYNKLIRPVQNMTQKVGVRFGLAFVQLINVNEKNQVMKSNVWLRLVWYDYQLQWDEADYGGIGVLRLPPDKVWKPDIVLFNNADGNYEVRYKSNVLIYPTGEVLWVPPAIYQSSCTIDVTYFPFDQQTCIMKFGSWTFNGDQVSLALYNNKNFVDLSDYWKSGTWDIIEVPAYLNVYEGDSNHPTETDITFYIIIRRKTLFYTVNLILPTVLISFLCVLVFYLPAEAGEKVTLGISILLSLVVFLLLVSKILPPTSLVLPLIAKYLLFTFIMNTVSILVTVIIINWNFRGPRTHRMPMYIRSIFLHYLPAFLFMKRPRKTRLRWMMEMPGMSMPAHPHPSYGSPAELPKHISAIGGKQSKMEVMELSDLHHPNCKINRKVNSGGELGLGDGCRRESESSDSILLSPEASKATEAVEFIAEHLRNEDLYIQTREDWKYVAMVIDRLQLYIFFIVTTAGTVGILMDAPHIFEYVDQDRIIEIYRGK</sequence>
<comment type="function">
    <text evidence="1">After binding acetylcholine, the AChR responds by an extensive change in conformation that affects all subunits and leads to opening of an ion-conducting channel across the plasma membrane.</text>
</comment>
<comment type="subcellular location">
    <subcellularLocation>
        <location>Postsynaptic cell membrane</location>
        <topology>Multi-pass membrane protein</topology>
    </subcellularLocation>
    <subcellularLocation>
        <location evidence="1">Cell membrane</location>
        <topology evidence="1">Multi-pass membrane protein</topology>
    </subcellularLocation>
</comment>
<comment type="tissue specificity">
    <text evidence="3">CNS in embryos.</text>
</comment>
<comment type="developmental stage">
    <text evidence="3">Late embryonic and late pupal stages.</text>
</comment>
<comment type="similarity">
    <text evidence="4">Belongs to the ligand-gated ion channel (TC 1.A.9) family. Acetylcholine receptor (TC 1.A.9.1) subfamily.</text>
</comment>
<feature type="signal peptide" evidence="2">
    <location>
        <begin position="1"/>
        <end position="24"/>
    </location>
</feature>
<feature type="chain" id="PRO_0000000301" description="Acetylcholine receptor subunit beta-like 1">
    <location>
        <begin position="25"/>
        <end position="521"/>
    </location>
</feature>
<feature type="topological domain" description="Extracellular">
    <location>
        <begin position="25"/>
        <end position="235"/>
    </location>
</feature>
<feature type="transmembrane region" description="Helical">
    <location>
        <begin position="236"/>
        <end position="260"/>
    </location>
</feature>
<feature type="transmembrane region" description="Helical">
    <location>
        <begin position="268"/>
        <end position="286"/>
    </location>
</feature>
<feature type="transmembrane region" description="Helical">
    <location>
        <begin position="302"/>
        <end position="323"/>
    </location>
</feature>
<feature type="topological domain" description="Cytoplasmic">
    <location>
        <begin position="324"/>
        <end position="481"/>
    </location>
</feature>
<feature type="transmembrane region" description="Helical">
    <location>
        <begin position="482"/>
        <end position="500"/>
    </location>
</feature>
<feature type="glycosylation site" description="N-linked (GlcNAc...) asparagine" evidence="2">
    <location>
        <position position="48"/>
    </location>
</feature>
<feature type="disulfide bond" evidence="1">
    <location>
        <begin position="152"/>
        <end position="166"/>
    </location>
</feature>
<feature type="sequence variant">
    <original>V</original>
    <variation>I</variation>
    <location>
        <position position="73"/>
    </location>
</feature>
<feature type="sequence conflict" description="In Ref. 3; AAA28311." evidence="4" ref="3">
    <original>EL</original>
    <variation>DV</variation>
    <location>
        <begin position="383"/>
        <end position="384"/>
    </location>
</feature>
<gene>
    <name type="primary">nAChRbeta1</name>
    <name type="synonym">Acr64B</name>
    <name type="synonym">AcrD</name>
    <name type="synonym">ard</name>
    <name type="synonym">nAcRbeta-64B</name>
    <name type="ORF">CG11348</name>
</gene>
<organism>
    <name type="scientific">Drosophila melanogaster</name>
    <name type="common">Fruit fly</name>
    <dbReference type="NCBI Taxonomy" id="7227"/>
    <lineage>
        <taxon>Eukaryota</taxon>
        <taxon>Metazoa</taxon>
        <taxon>Ecdysozoa</taxon>
        <taxon>Arthropoda</taxon>
        <taxon>Hexapoda</taxon>
        <taxon>Insecta</taxon>
        <taxon>Pterygota</taxon>
        <taxon>Neoptera</taxon>
        <taxon>Endopterygota</taxon>
        <taxon>Diptera</taxon>
        <taxon>Brachycera</taxon>
        <taxon>Muscomorpha</taxon>
        <taxon>Ephydroidea</taxon>
        <taxon>Drosophilidae</taxon>
        <taxon>Drosophila</taxon>
        <taxon>Sophophora</taxon>
    </lineage>
</organism>
<keyword id="KW-1003">Cell membrane</keyword>
<keyword id="KW-1015">Disulfide bond</keyword>
<keyword id="KW-0325">Glycoprotein</keyword>
<keyword id="KW-0407">Ion channel</keyword>
<keyword id="KW-0406">Ion transport</keyword>
<keyword id="KW-1071">Ligand-gated ion channel</keyword>
<keyword id="KW-0472">Membrane</keyword>
<keyword id="KW-0628">Postsynaptic cell membrane</keyword>
<keyword id="KW-0675">Receptor</keyword>
<keyword id="KW-1185">Reference proteome</keyword>
<keyword id="KW-0732">Signal</keyword>
<keyword id="KW-0770">Synapse</keyword>
<keyword id="KW-0812">Transmembrane</keyword>
<keyword id="KW-1133">Transmembrane helix</keyword>
<keyword id="KW-0813">Transport</keyword>